<proteinExistence type="inferred from homology"/>
<feature type="chain" id="PRO_1000082846" description="ATP-dependent RNA helicase RhlB">
    <location>
        <begin position="1"/>
        <end position="415"/>
    </location>
</feature>
<feature type="domain" description="Helicase ATP-binding" evidence="1">
    <location>
        <begin position="40"/>
        <end position="218"/>
    </location>
</feature>
<feature type="domain" description="Helicase C-terminal" evidence="1">
    <location>
        <begin position="241"/>
        <end position="389"/>
    </location>
</feature>
<feature type="short sequence motif" description="Q motif">
    <location>
        <begin position="9"/>
        <end position="37"/>
    </location>
</feature>
<feature type="short sequence motif" description="DEAD box">
    <location>
        <begin position="164"/>
        <end position="167"/>
    </location>
</feature>
<feature type="binding site" evidence="1">
    <location>
        <begin position="53"/>
        <end position="60"/>
    </location>
    <ligand>
        <name>ATP</name>
        <dbReference type="ChEBI" id="CHEBI:30616"/>
    </ligand>
</feature>
<name>RHLB_HAEIG</name>
<gene>
    <name evidence="1" type="primary">rhlB</name>
    <name type="ordered locus">CGSHiGG_08010</name>
</gene>
<protein>
    <recommendedName>
        <fullName evidence="1">ATP-dependent RNA helicase RhlB</fullName>
        <ecNumber evidence="1">3.6.4.13</ecNumber>
    </recommendedName>
</protein>
<organism>
    <name type="scientific">Haemophilus influenzae (strain PittGG)</name>
    <dbReference type="NCBI Taxonomy" id="374931"/>
    <lineage>
        <taxon>Bacteria</taxon>
        <taxon>Pseudomonadati</taxon>
        <taxon>Pseudomonadota</taxon>
        <taxon>Gammaproteobacteria</taxon>
        <taxon>Pasteurellales</taxon>
        <taxon>Pasteurellaceae</taxon>
        <taxon>Haemophilus</taxon>
    </lineage>
</organism>
<dbReference type="EC" id="3.6.4.13" evidence="1"/>
<dbReference type="EMBL" id="CP000672">
    <property type="protein sequence ID" value="ABR00442.1"/>
    <property type="molecule type" value="Genomic_DNA"/>
</dbReference>
<dbReference type="SMR" id="A5UI36"/>
<dbReference type="KEGG" id="hiq:CGSHiGG_08010"/>
<dbReference type="HOGENOM" id="CLU_003041_1_3_6"/>
<dbReference type="Proteomes" id="UP000001990">
    <property type="component" value="Chromosome"/>
</dbReference>
<dbReference type="GO" id="GO:0005829">
    <property type="term" value="C:cytosol"/>
    <property type="evidence" value="ECO:0007669"/>
    <property type="project" value="TreeGrafter"/>
</dbReference>
<dbReference type="GO" id="GO:0005524">
    <property type="term" value="F:ATP binding"/>
    <property type="evidence" value="ECO:0007669"/>
    <property type="project" value="UniProtKB-UniRule"/>
</dbReference>
<dbReference type="GO" id="GO:0016887">
    <property type="term" value="F:ATP hydrolysis activity"/>
    <property type="evidence" value="ECO:0007669"/>
    <property type="project" value="RHEA"/>
</dbReference>
<dbReference type="GO" id="GO:0003723">
    <property type="term" value="F:RNA binding"/>
    <property type="evidence" value="ECO:0007669"/>
    <property type="project" value="UniProtKB-UniRule"/>
</dbReference>
<dbReference type="GO" id="GO:0003724">
    <property type="term" value="F:RNA helicase activity"/>
    <property type="evidence" value="ECO:0007669"/>
    <property type="project" value="UniProtKB-UniRule"/>
</dbReference>
<dbReference type="GO" id="GO:0006401">
    <property type="term" value="P:RNA catabolic process"/>
    <property type="evidence" value="ECO:0007669"/>
    <property type="project" value="UniProtKB-UniRule"/>
</dbReference>
<dbReference type="CDD" id="cd00268">
    <property type="entry name" value="DEADc"/>
    <property type="match status" value="1"/>
</dbReference>
<dbReference type="CDD" id="cd18787">
    <property type="entry name" value="SF2_C_DEAD"/>
    <property type="match status" value="1"/>
</dbReference>
<dbReference type="FunFam" id="3.40.50.300:FF:000312">
    <property type="entry name" value="ATP-dependent RNA helicase RhlB"/>
    <property type="match status" value="1"/>
</dbReference>
<dbReference type="Gene3D" id="3.40.50.300">
    <property type="entry name" value="P-loop containing nucleotide triphosphate hydrolases"/>
    <property type="match status" value="2"/>
</dbReference>
<dbReference type="HAMAP" id="MF_00661">
    <property type="entry name" value="DEAD_helicase_RhlB"/>
    <property type="match status" value="1"/>
</dbReference>
<dbReference type="InterPro" id="IPR011545">
    <property type="entry name" value="DEAD/DEAH_box_helicase_dom"/>
</dbReference>
<dbReference type="InterPro" id="IPR050079">
    <property type="entry name" value="DEAD_box_RNA_helicase"/>
</dbReference>
<dbReference type="InterPro" id="IPR014001">
    <property type="entry name" value="Helicase_ATP-bd"/>
</dbReference>
<dbReference type="InterPro" id="IPR001650">
    <property type="entry name" value="Helicase_C-like"/>
</dbReference>
<dbReference type="InterPro" id="IPR027417">
    <property type="entry name" value="P-loop_NTPase"/>
</dbReference>
<dbReference type="InterPro" id="IPR000629">
    <property type="entry name" value="RNA-helicase_DEAD-box_CS"/>
</dbReference>
<dbReference type="InterPro" id="IPR023554">
    <property type="entry name" value="RNA_helicase_ATP-dep_RhlB"/>
</dbReference>
<dbReference type="InterPro" id="IPR014014">
    <property type="entry name" value="RNA_helicase_DEAD_Q_motif"/>
</dbReference>
<dbReference type="NCBIfam" id="NF003419">
    <property type="entry name" value="PRK04837.1"/>
    <property type="match status" value="1"/>
</dbReference>
<dbReference type="PANTHER" id="PTHR47959:SF10">
    <property type="entry name" value="ATP-DEPENDENT RNA HELICASE RHLB"/>
    <property type="match status" value="1"/>
</dbReference>
<dbReference type="PANTHER" id="PTHR47959">
    <property type="entry name" value="ATP-DEPENDENT RNA HELICASE RHLE-RELATED"/>
    <property type="match status" value="1"/>
</dbReference>
<dbReference type="Pfam" id="PF00270">
    <property type="entry name" value="DEAD"/>
    <property type="match status" value="1"/>
</dbReference>
<dbReference type="Pfam" id="PF00271">
    <property type="entry name" value="Helicase_C"/>
    <property type="match status" value="1"/>
</dbReference>
<dbReference type="SMART" id="SM00487">
    <property type="entry name" value="DEXDc"/>
    <property type="match status" value="1"/>
</dbReference>
<dbReference type="SMART" id="SM00490">
    <property type="entry name" value="HELICc"/>
    <property type="match status" value="1"/>
</dbReference>
<dbReference type="SUPFAM" id="SSF52540">
    <property type="entry name" value="P-loop containing nucleoside triphosphate hydrolases"/>
    <property type="match status" value="1"/>
</dbReference>
<dbReference type="PROSITE" id="PS00039">
    <property type="entry name" value="DEAD_ATP_HELICASE"/>
    <property type="match status" value="1"/>
</dbReference>
<dbReference type="PROSITE" id="PS51192">
    <property type="entry name" value="HELICASE_ATP_BIND_1"/>
    <property type="match status" value="1"/>
</dbReference>
<dbReference type="PROSITE" id="PS51194">
    <property type="entry name" value="HELICASE_CTER"/>
    <property type="match status" value="1"/>
</dbReference>
<dbReference type="PROSITE" id="PS51195">
    <property type="entry name" value="Q_MOTIF"/>
    <property type="match status" value="1"/>
</dbReference>
<accession>A5UI36</accession>
<reference key="1">
    <citation type="journal article" date="2007" name="Genome Biol.">
        <title>Characterization and modeling of the Haemophilus influenzae core and supragenomes based on the complete genomic sequences of Rd and 12 clinical nontypeable strains.</title>
        <authorList>
            <person name="Hogg J.S."/>
            <person name="Hu F.Z."/>
            <person name="Janto B."/>
            <person name="Boissy R."/>
            <person name="Hayes J."/>
            <person name="Keefe R."/>
            <person name="Post J.C."/>
            <person name="Ehrlich G.D."/>
        </authorList>
    </citation>
    <scope>NUCLEOTIDE SEQUENCE [LARGE SCALE GENOMIC DNA]</scope>
    <source>
        <strain>PittGG</strain>
    </source>
</reference>
<sequence>MQQDYLSQQRFSALPLHPIVRGALAKKGFDFCTPIQALSLPISLNGRDVAGQAQTGTGKTMAFLTATFHHLLTHQDPNLEYPHPRALILAPTRELAVQISNDAEFLAKASGLKTALAYGGDGYDKQLQVIECGVDILIGTTGRVIDYVKQGVIGLDEIQVVVLDEADRMFDLGFIRDIRYLLRKCPAPQARLTMLFSATLSYKVRELAFEDMNDPEYIEIEPEQKTGHRIKEELFYPSNQDKMALLLTLMEDEWPERCIVFANTKHRCEEIWGYLAADGHRVGLLTGDVAQKKRLSLLKQFTDGDLDILVATDVAARGLHISDVTHVFNYDLPDDREDYVHRIGRTGRAGESGVSISFACEEYAMNLPAIEEYIGHSIPVSQYETEALLELPKPYRLKRAVPPQGHTRHRSYHTK</sequence>
<keyword id="KW-0067">ATP-binding</keyword>
<keyword id="KW-0963">Cytoplasm</keyword>
<keyword id="KW-0347">Helicase</keyword>
<keyword id="KW-0378">Hydrolase</keyword>
<keyword id="KW-0547">Nucleotide-binding</keyword>
<keyword id="KW-0694">RNA-binding</keyword>
<comment type="function">
    <text evidence="1">DEAD-box RNA helicase involved in RNA degradation. Has RNA-dependent ATPase activity and unwinds double-stranded RNA.</text>
</comment>
<comment type="catalytic activity">
    <reaction evidence="1">
        <text>ATP + H2O = ADP + phosphate + H(+)</text>
        <dbReference type="Rhea" id="RHEA:13065"/>
        <dbReference type="ChEBI" id="CHEBI:15377"/>
        <dbReference type="ChEBI" id="CHEBI:15378"/>
        <dbReference type="ChEBI" id="CHEBI:30616"/>
        <dbReference type="ChEBI" id="CHEBI:43474"/>
        <dbReference type="ChEBI" id="CHEBI:456216"/>
        <dbReference type="EC" id="3.6.4.13"/>
    </reaction>
</comment>
<comment type="subunit">
    <text evidence="1">Component of the RNA degradosome, which is a multiprotein complex involved in RNA processing and mRNA degradation.</text>
</comment>
<comment type="subcellular location">
    <subcellularLocation>
        <location evidence="1">Cytoplasm</location>
    </subcellularLocation>
</comment>
<comment type="similarity">
    <text evidence="1">Belongs to the DEAD box helicase family. RhlB subfamily.</text>
</comment>
<evidence type="ECO:0000255" key="1">
    <source>
        <dbReference type="HAMAP-Rule" id="MF_00661"/>
    </source>
</evidence>